<sequence>MSKTAKKLAAASEKIDRTKVYPVAAAIDVVKQAAYAKFDETVDVAVRLGVDPRHADQMVRGAVVLPNGLGKDVRVLVFAKGEKEKEALDAGADYVGAEDLVSKIQEGWFEFDTAIATPDMMGVVGKIGKLLGPRGLMPNPKVGTVTFEVSRAVKESKAGKVEFRVEKAGIVHAPVGKVSFDADSLKGNLLALVEALVKAKPSAAKGIYIKKISMSSTMGPGINLDIADVTSQI</sequence>
<evidence type="ECO:0000255" key="1">
    <source>
        <dbReference type="HAMAP-Rule" id="MF_01318"/>
    </source>
</evidence>
<evidence type="ECO:0000305" key="2"/>
<feature type="chain" id="PRO_0000308068" description="Large ribosomal subunit protein uL1">
    <location>
        <begin position="1"/>
        <end position="233"/>
    </location>
</feature>
<dbReference type="EMBL" id="CP000482">
    <property type="protein sequence ID" value="ABK98301.1"/>
    <property type="molecule type" value="Genomic_DNA"/>
</dbReference>
<dbReference type="RefSeq" id="WP_011734614.1">
    <property type="nucleotide sequence ID" value="NC_008609.1"/>
</dbReference>
<dbReference type="SMR" id="A1ALT1"/>
<dbReference type="STRING" id="338966.Ppro_0670"/>
<dbReference type="KEGG" id="ppd:Ppro_0670"/>
<dbReference type="eggNOG" id="COG0081">
    <property type="taxonomic scope" value="Bacteria"/>
</dbReference>
<dbReference type="HOGENOM" id="CLU_062853_0_0_7"/>
<dbReference type="OrthoDB" id="9803740at2"/>
<dbReference type="Proteomes" id="UP000006732">
    <property type="component" value="Chromosome"/>
</dbReference>
<dbReference type="GO" id="GO:0022625">
    <property type="term" value="C:cytosolic large ribosomal subunit"/>
    <property type="evidence" value="ECO:0007669"/>
    <property type="project" value="TreeGrafter"/>
</dbReference>
<dbReference type="GO" id="GO:0019843">
    <property type="term" value="F:rRNA binding"/>
    <property type="evidence" value="ECO:0007669"/>
    <property type="project" value="UniProtKB-UniRule"/>
</dbReference>
<dbReference type="GO" id="GO:0003735">
    <property type="term" value="F:structural constituent of ribosome"/>
    <property type="evidence" value="ECO:0007669"/>
    <property type="project" value="InterPro"/>
</dbReference>
<dbReference type="GO" id="GO:0000049">
    <property type="term" value="F:tRNA binding"/>
    <property type="evidence" value="ECO:0007669"/>
    <property type="project" value="UniProtKB-KW"/>
</dbReference>
<dbReference type="GO" id="GO:0006417">
    <property type="term" value="P:regulation of translation"/>
    <property type="evidence" value="ECO:0007669"/>
    <property type="project" value="UniProtKB-KW"/>
</dbReference>
<dbReference type="GO" id="GO:0006412">
    <property type="term" value="P:translation"/>
    <property type="evidence" value="ECO:0007669"/>
    <property type="project" value="UniProtKB-UniRule"/>
</dbReference>
<dbReference type="CDD" id="cd00403">
    <property type="entry name" value="Ribosomal_L1"/>
    <property type="match status" value="1"/>
</dbReference>
<dbReference type="FunFam" id="3.40.50.790:FF:000001">
    <property type="entry name" value="50S ribosomal protein L1"/>
    <property type="match status" value="1"/>
</dbReference>
<dbReference type="Gene3D" id="3.30.190.20">
    <property type="match status" value="1"/>
</dbReference>
<dbReference type="Gene3D" id="3.40.50.790">
    <property type="match status" value="1"/>
</dbReference>
<dbReference type="HAMAP" id="MF_01318_B">
    <property type="entry name" value="Ribosomal_uL1_B"/>
    <property type="match status" value="1"/>
</dbReference>
<dbReference type="InterPro" id="IPR005878">
    <property type="entry name" value="Ribosom_uL1_bac-type"/>
</dbReference>
<dbReference type="InterPro" id="IPR002143">
    <property type="entry name" value="Ribosomal_uL1"/>
</dbReference>
<dbReference type="InterPro" id="IPR023674">
    <property type="entry name" value="Ribosomal_uL1-like"/>
</dbReference>
<dbReference type="InterPro" id="IPR028364">
    <property type="entry name" value="Ribosomal_uL1/biogenesis"/>
</dbReference>
<dbReference type="InterPro" id="IPR016095">
    <property type="entry name" value="Ribosomal_uL1_3-a/b-sand"/>
</dbReference>
<dbReference type="InterPro" id="IPR023673">
    <property type="entry name" value="Ribosomal_uL1_CS"/>
</dbReference>
<dbReference type="NCBIfam" id="TIGR01169">
    <property type="entry name" value="rplA_bact"/>
    <property type="match status" value="1"/>
</dbReference>
<dbReference type="PANTHER" id="PTHR36427">
    <property type="entry name" value="54S RIBOSOMAL PROTEIN L1, MITOCHONDRIAL"/>
    <property type="match status" value="1"/>
</dbReference>
<dbReference type="PANTHER" id="PTHR36427:SF3">
    <property type="entry name" value="LARGE RIBOSOMAL SUBUNIT PROTEIN UL1M"/>
    <property type="match status" value="1"/>
</dbReference>
<dbReference type="Pfam" id="PF00687">
    <property type="entry name" value="Ribosomal_L1"/>
    <property type="match status" value="1"/>
</dbReference>
<dbReference type="PIRSF" id="PIRSF002155">
    <property type="entry name" value="Ribosomal_L1"/>
    <property type="match status" value="1"/>
</dbReference>
<dbReference type="SUPFAM" id="SSF56808">
    <property type="entry name" value="Ribosomal protein L1"/>
    <property type="match status" value="1"/>
</dbReference>
<dbReference type="PROSITE" id="PS01199">
    <property type="entry name" value="RIBOSOMAL_L1"/>
    <property type="match status" value="1"/>
</dbReference>
<protein>
    <recommendedName>
        <fullName evidence="1">Large ribosomal subunit protein uL1</fullName>
    </recommendedName>
    <alternativeName>
        <fullName evidence="2">50S ribosomal protein L1</fullName>
    </alternativeName>
</protein>
<organism>
    <name type="scientific">Pelobacter propionicus (strain DSM 2379 / NBRC 103807 / OttBd1)</name>
    <dbReference type="NCBI Taxonomy" id="338966"/>
    <lineage>
        <taxon>Bacteria</taxon>
        <taxon>Pseudomonadati</taxon>
        <taxon>Thermodesulfobacteriota</taxon>
        <taxon>Desulfuromonadia</taxon>
        <taxon>Desulfuromonadales</taxon>
        <taxon>Desulfuromonadaceae</taxon>
        <taxon>Pelobacter</taxon>
    </lineage>
</organism>
<proteinExistence type="inferred from homology"/>
<comment type="function">
    <text evidence="1">Binds directly to 23S rRNA. The L1 stalk is quite mobile in the ribosome, and is involved in E site tRNA release.</text>
</comment>
<comment type="function">
    <text evidence="1">Protein L1 is also a translational repressor protein, it controls the translation of the L11 operon by binding to its mRNA.</text>
</comment>
<comment type="subunit">
    <text evidence="1">Part of the 50S ribosomal subunit.</text>
</comment>
<comment type="similarity">
    <text evidence="1">Belongs to the universal ribosomal protein uL1 family.</text>
</comment>
<accession>A1ALT1</accession>
<keyword id="KW-1185">Reference proteome</keyword>
<keyword id="KW-0678">Repressor</keyword>
<keyword id="KW-0687">Ribonucleoprotein</keyword>
<keyword id="KW-0689">Ribosomal protein</keyword>
<keyword id="KW-0694">RNA-binding</keyword>
<keyword id="KW-0699">rRNA-binding</keyword>
<keyword id="KW-0810">Translation regulation</keyword>
<keyword id="KW-0820">tRNA-binding</keyword>
<name>RL1_PELPD</name>
<reference key="1">
    <citation type="submission" date="2006-10" db="EMBL/GenBank/DDBJ databases">
        <title>Complete sequence of chromosome of Pelobacter propionicus DSM 2379.</title>
        <authorList>
            <consortium name="US DOE Joint Genome Institute"/>
            <person name="Copeland A."/>
            <person name="Lucas S."/>
            <person name="Lapidus A."/>
            <person name="Barry K."/>
            <person name="Detter J.C."/>
            <person name="Glavina del Rio T."/>
            <person name="Hammon N."/>
            <person name="Israni S."/>
            <person name="Dalin E."/>
            <person name="Tice H."/>
            <person name="Pitluck S."/>
            <person name="Saunders E."/>
            <person name="Brettin T."/>
            <person name="Bruce D."/>
            <person name="Han C."/>
            <person name="Tapia R."/>
            <person name="Schmutz J."/>
            <person name="Larimer F."/>
            <person name="Land M."/>
            <person name="Hauser L."/>
            <person name="Kyrpides N."/>
            <person name="Kim E."/>
            <person name="Lovley D."/>
            <person name="Richardson P."/>
        </authorList>
    </citation>
    <scope>NUCLEOTIDE SEQUENCE [LARGE SCALE GENOMIC DNA]</scope>
    <source>
        <strain>DSM 2379 / NBRC 103807 / OttBd1</strain>
    </source>
</reference>
<gene>
    <name evidence="1" type="primary">rplA</name>
    <name type="ordered locus">Ppro_0670</name>
</gene>